<protein>
    <recommendedName>
        <fullName evidence="1">Transcription antitermination protein NusB</fullName>
    </recommendedName>
    <alternativeName>
        <fullName evidence="1">Antitermination factor NusB</fullName>
    </alternativeName>
</protein>
<accession>B9JV80</accession>
<comment type="function">
    <text evidence="1">Involved in transcription antitermination. Required for transcription of ribosomal RNA (rRNA) genes. Binds specifically to the boxA antiterminator sequence of the ribosomal RNA (rrn) operons.</text>
</comment>
<comment type="similarity">
    <text evidence="1">Belongs to the NusB family.</text>
</comment>
<keyword id="KW-1185">Reference proteome</keyword>
<keyword id="KW-0694">RNA-binding</keyword>
<keyword id="KW-0804">Transcription</keyword>
<keyword id="KW-0889">Transcription antitermination</keyword>
<keyword id="KW-0805">Transcription regulation</keyword>
<organism>
    <name type="scientific">Allorhizobium ampelinum (strain ATCC BAA-846 / DSM 112012 / S4)</name>
    <name type="common">Agrobacterium vitis (strain S4)</name>
    <dbReference type="NCBI Taxonomy" id="311402"/>
    <lineage>
        <taxon>Bacteria</taxon>
        <taxon>Pseudomonadati</taxon>
        <taxon>Pseudomonadota</taxon>
        <taxon>Alphaproteobacteria</taxon>
        <taxon>Hyphomicrobiales</taxon>
        <taxon>Rhizobiaceae</taxon>
        <taxon>Rhizobium/Agrobacterium group</taxon>
        <taxon>Allorhizobium</taxon>
        <taxon>Allorhizobium ampelinum</taxon>
    </lineage>
</organism>
<gene>
    <name evidence="1" type="primary">nusB</name>
    <name type="ordered locus">Avi_1620</name>
</gene>
<name>NUSB_ALLAM</name>
<evidence type="ECO:0000255" key="1">
    <source>
        <dbReference type="HAMAP-Rule" id="MF_00073"/>
    </source>
</evidence>
<feature type="chain" id="PRO_1000118107" description="Transcription antitermination protein NusB">
    <location>
        <begin position="1"/>
        <end position="160"/>
    </location>
</feature>
<sequence length="160" mass="17799">MTTENNKPPVKTANQRGAARLAAVQALYQMDIGGTGVLEVVAEYETHRLGQEIDGETYLKADASWFRSIVAGVVRDQTKIDPLIRQALQDDWSLARVDSTVRAILRAGTFELLERKDVPIAVIVTEYVEIAHAFFQEDEPKLVNAVLDRIAKQVRVPAVK</sequence>
<reference key="1">
    <citation type="journal article" date="2009" name="J. Bacteriol.">
        <title>Genome sequences of three Agrobacterium biovars help elucidate the evolution of multichromosome genomes in bacteria.</title>
        <authorList>
            <person name="Slater S.C."/>
            <person name="Goldman B.S."/>
            <person name="Goodner B."/>
            <person name="Setubal J.C."/>
            <person name="Farrand S.K."/>
            <person name="Nester E.W."/>
            <person name="Burr T.J."/>
            <person name="Banta L."/>
            <person name="Dickerman A.W."/>
            <person name="Paulsen I."/>
            <person name="Otten L."/>
            <person name="Suen G."/>
            <person name="Welch R."/>
            <person name="Almeida N.F."/>
            <person name="Arnold F."/>
            <person name="Burton O.T."/>
            <person name="Du Z."/>
            <person name="Ewing A."/>
            <person name="Godsy E."/>
            <person name="Heisel S."/>
            <person name="Houmiel K.L."/>
            <person name="Jhaveri J."/>
            <person name="Lu J."/>
            <person name="Miller N.M."/>
            <person name="Norton S."/>
            <person name="Chen Q."/>
            <person name="Phoolcharoen W."/>
            <person name="Ohlin V."/>
            <person name="Ondrusek D."/>
            <person name="Pride N."/>
            <person name="Stricklin S.L."/>
            <person name="Sun J."/>
            <person name="Wheeler C."/>
            <person name="Wilson L."/>
            <person name="Zhu H."/>
            <person name="Wood D.W."/>
        </authorList>
    </citation>
    <scope>NUCLEOTIDE SEQUENCE [LARGE SCALE GENOMIC DNA]</scope>
    <source>
        <strain>ATCC BAA-846 / DSM 112012 / S4</strain>
    </source>
</reference>
<proteinExistence type="inferred from homology"/>
<dbReference type="EMBL" id="CP000633">
    <property type="protein sequence ID" value="ACM36160.1"/>
    <property type="molecule type" value="Genomic_DNA"/>
</dbReference>
<dbReference type="RefSeq" id="WP_015915584.1">
    <property type="nucleotide sequence ID" value="NC_011989.1"/>
</dbReference>
<dbReference type="SMR" id="B9JV80"/>
<dbReference type="STRING" id="311402.Avi_1620"/>
<dbReference type="KEGG" id="avi:Avi_1620"/>
<dbReference type="eggNOG" id="COG0781">
    <property type="taxonomic scope" value="Bacteria"/>
</dbReference>
<dbReference type="HOGENOM" id="CLU_087843_4_0_5"/>
<dbReference type="Proteomes" id="UP000001596">
    <property type="component" value="Chromosome 1"/>
</dbReference>
<dbReference type="GO" id="GO:0005829">
    <property type="term" value="C:cytosol"/>
    <property type="evidence" value="ECO:0007669"/>
    <property type="project" value="TreeGrafter"/>
</dbReference>
<dbReference type="GO" id="GO:0003723">
    <property type="term" value="F:RNA binding"/>
    <property type="evidence" value="ECO:0007669"/>
    <property type="project" value="UniProtKB-UniRule"/>
</dbReference>
<dbReference type="GO" id="GO:0006353">
    <property type="term" value="P:DNA-templated transcription termination"/>
    <property type="evidence" value="ECO:0007669"/>
    <property type="project" value="UniProtKB-UniRule"/>
</dbReference>
<dbReference type="GO" id="GO:0031564">
    <property type="term" value="P:transcription antitermination"/>
    <property type="evidence" value="ECO:0007669"/>
    <property type="project" value="UniProtKB-KW"/>
</dbReference>
<dbReference type="Gene3D" id="1.10.940.10">
    <property type="entry name" value="NusB-like"/>
    <property type="match status" value="1"/>
</dbReference>
<dbReference type="HAMAP" id="MF_00073">
    <property type="entry name" value="NusB"/>
    <property type="match status" value="1"/>
</dbReference>
<dbReference type="InterPro" id="IPR035926">
    <property type="entry name" value="NusB-like_sf"/>
</dbReference>
<dbReference type="InterPro" id="IPR011605">
    <property type="entry name" value="NusB_fam"/>
</dbReference>
<dbReference type="InterPro" id="IPR006027">
    <property type="entry name" value="NusB_RsmB_TIM44"/>
</dbReference>
<dbReference type="NCBIfam" id="TIGR01951">
    <property type="entry name" value="nusB"/>
    <property type="match status" value="1"/>
</dbReference>
<dbReference type="PANTHER" id="PTHR11078:SF3">
    <property type="entry name" value="ANTITERMINATION NUSB DOMAIN-CONTAINING PROTEIN"/>
    <property type="match status" value="1"/>
</dbReference>
<dbReference type="PANTHER" id="PTHR11078">
    <property type="entry name" value="N UTILIZATION SUBSTANCE PROTEIN B-RELATED"/>
    <property type="match status" value="1"/>
</dbReference>
<dbReference type="Pfam" id="PF01029">
    <property type="entry name" value="NusB"/>
    <property type="match status" value="1"/>
</dbReference>
<dbReference type="SUPFAM" id="SSF48013">
    <property type="entry name" value="NusB-like"/>
    <property type="match status" value="1"/>
</dbReference>